<sequence>MQGALFIKPTILLPLPSSVSSPKLTFLLPHATKASRLSSLRSNNSSSSSSLTSDPNTVDYNSSILSVFPAEACEVISGYACSADIYPEVKLDTKPVSRPVASEPVDREYEEYNSPKTVFREEACDDLGGEFCEPDFQKDAN</sequence>
<comment type="function">
    <text evidence="5">Thylakoid-determinant subunit of high molecular weight LFNRs-containing protein complexes.</text>
</comment>
<comment type="subunit">
    <text evidence="5">Component of high molecular weight thylakoid LFNRs-containing protein complexes containing LIR1, LFNR1, LFNR2, TIC62 and TROL proteins. Interacts directly with LFNR1 and LFNR2; LIR1 increases the affinity of LFNR1 and LFNR2 for TIC62 and subsequent thylakoid relocalization.</text>
</comment>
<comment type="subcellular location">
    <subcellularLocation>
        <location evidence="5">Plastid</location>
        <location evidence="5">Chloroplast thylakoid membrane</location>
        <topology evidence="5">Peripheral membrane protein</topology>
        <orientation evidence="5">Stromal side</orientation>
    </subcellularLocation>
    <subcellularLocation>
        <location evidence="5">Plastid</location>
        <location evidence="5">Chloroplast envelope</location>
    </subcellularLocation>
    <subcellularLocation>
        <location evidence="5">Plastid</location>
        <location evidence="5">Chloroplast stroma</location>
    </subcellularLocation>
</comment>
<comment type="alternative products">
    <event type="alternative splicing"/>
    <isoform>
        <id>Q96500-1</id>
        <name>1</name>
        <sequence type="displayed"/>
    </isoform>
    <isoform>
        <id>Q96500-2</id>
        <name>2</name>
        <sequence type="described" ref="VSP_059232"/>
    </isoform>
</comment>
<comment type="induction">
    <text evidence="3 4 5">Expression is controlled by light and by a circadian clock. Differentially regulated at the level of mRNA stability at different times of day, being a target of the degradation pathway mediated by the downstream (DST) instability determinant and thus following a circadian clock rhythm with highest levels in early afternoon (PubMed:16055688). Rapidly degraded upon illumination; this degradation coincides with the release of the LFNR from the thylakoid membrane (PubMed:26941088). Repressed by calmodulin (CaM) antagonists such as trifluoperazine (TFP) and N-(6-aminohexyl)-5-chloro-1-naphthelene-sulfonamid-hydrochloride (W7); this repression is alleviated by lanthanum (e.g. LaCl(3)) (PubMed:16980540).</text>
</comment>
<comment type="PTM">
    <text evidence="5">May form interchain disulfide bonds with LFNR1 and LFNR2.</text>
</comment>
<comment type="disruption phenotype">
    <text evidence="5">Slight increase in nonphotochemical quenching (NPQ). Marked decrease in the accumulation of LFNR1 and LFNR2-containing thylakoid protein complexes.</text>
</comment>
<reference key="1">
    <citation type="journal article" date="1996" name="Nucleic Acids Res.">
        <title>Sequence analysis of an 81 kb contig from Arabidopsis thaliana chromosome III.</title>
        <authorList>
            <person name="Quigley F."/>
            <person name="Dao P."/>
            <person name="Cottet A."/>
            <person name="Mache R."/>
        </authorList>
    </citation>
    <scope>NUCLEOTIDE SEQUENCE [GENOMIC DNA / MRNA]</scope>
    <source>
        <strain>cv. Columbia</strain>
    </source>
</reference>
<reference key="2">
    <citation type="journal article" date="2000" name="DNA Res.">
        <title>Structural analysis of Arabidopsis thaliana chromosome 3. I. Sequence features of the regions of 4,504,864 bp covered by sixty P1 and TAC clones.</title>
        <authorList>
            <person name="Sato S."/>
            <person name="Nakamura Y."/>
            <person name="Kaneko T."/>
            <person name="Katoh T."/>
            <person name="Asamizu E."/>
            <person name="Tabata S."/>
        </authorList>
    </citation>
    <scope>NUCLEOTIDE SEQUENCE [LARGE SCALE GENOMIC DNA]</scope>
    <source>
        <strain>cv. Columbia</strain>
    </source>
</reference>
<reference key="3">
    <citation type="journal article" date="2017" name="Plant J.">
        <title>Araport11: a complete reannotation of the Arabidopsis thaliana reference genome.</title>
        <authorList>
            <person name="Cheng C.Y."/>
            <person name="Krishnakumar V."/>
            <person name="Chan A.P."/>
            <person name="Thibaud-Nissen F."/>
            <person name="Schobel S."/>
            <person name="Town C.D."/>
        </authorList>
    </citation>
    <scope>GENOME REANNOTATION</scope>
    <source>
        <strain>cv. Columbia</strain>
    </source>
</reference>
<reference key="4">
    <citation type="journal article" date="2003" name="Science">
        <title>Empirical analysis of transcriptional activity in the Arabidopsis genome.</title>
        <authorList>
            <person name="Yamada K."/>
            <person name="Lim J."/>
            <person name="Dale J.M."/>
            <person name="Chen H."/>
            <person name="Shinn P."/>
            <person name="Palm C.J."/>
            <person name="Southwick A.M."/>
            <person name="Wu H.C."/>
            <person name="Kim C.J."/>
            <person name="Nguyen M."/>
            <person name="Pham P.K."/>
            <person name="Cheuk R.F."/>
            <person name="Karlin-Newmann G."/>
            <person name="Liu S.X."/>
            <person name="Lam B."/>
            <person name="Sakano H."/>
            <person name="Wu T."/>
            <person name="Yu G."/>
            <person name="Miranda M."/>
            <person name="Quach H.L."/>
            <person name="Tripp M."/>
            <person name="Chang C.H."/>
            <person name="Lee J.M."/>
            <person name="Toriumi M.J."/>
            <person name="Chan M.M."/>
            <person name="Tang C.C."/>
            <person name="Onodera C.S."/>
            <person name="Deng J.M."/>
            <person name="Akiyama K."/>
            <person name="Ansari Y."/>
            <person name="Arakawa T."/>
            <person name="Banh J."/>
            <person name="Banno F."/>
            <person name="Bowser L."/>
            <person name="Brooks S.Y."/>
            <person name="Carninci P."/>
            <person name="Chao Q."/>
            <person name="Choy N."/>
            <person name="Enju A."/>
            <person name="Goldsmith A.D."/>
            <person name="Gurjal M."/>
            <person name="Hansen N.F."/>
            <person name="Hayashizaki Y."/>
            <person name="Johnson-Hopson C."/>
            <person name="Hsuan V.W."/>
            <person name="Iida K."/>
            <person name="Karnes M."/>
            <person name="Khan S."/>
            <person name="Koesema E."/>
            <person name="Ishida J."/>
            <person name="Jiang P.X."/>
            <person name="Jones T."/>
            <person name="Kawai J."/>
            <person name="Kamiya A."/>
            <person name="Meyers C."/>
            <person name="Nakajima M."/>
            <person name="Narusaka M."/>
            <person name="Seki M."/>
            <person name="Sakurai T."/>
            <person name="Satou M."/>
            <person name="Tamse R."/>
            <person name="Vaysberg M."/>
            <person name="Wallender E.K."/>
            <person name="Wong C."/>
            <person name="Yamamura Y."/>
            <person name="Yuan S."/>
            <person name="Shinozaki K."/>
            <person name="Davis R.W."/>
            <person name="Theologis A."/>
            <person name="Ecker J.R."/>
        </authorList>
    </citation>
    <scope>NUCLEOTIDE SEQUENCE [LARGE SCALE MRNA]</scope>
    <source>
        <strain>cv. Columbia</strain>
    </source>
</reference>
<reference key="5">
    <citation type="journal article" date="2009" name="DNA Res.">
        <title>Analysis of multiple occurrences of alternative splicing events in Arabidopsis thaliana using novel sequenced full-length cDNAs.</title>
        <authorList>
            <person name="Iida K."/>
            <person name="Fukami-Kobayashi K."/>
            <person name="Toyoda A."/>
            <person name="Sakaki Y."/>
            <person name="Kobayashi M."/>
            <person name="Seki M."/>
            <person name="Shinozaki K."/>
        </authorList>
    </citation>
    <scope>NUCLEOTIDE SEQUENCE [LARGE SCALE MRNA] (ISOFORM 2)</scope>
    <source>
        <strain>cv. Columbia</strain>
    </source>
</reference>
<reference key="6">
    <citation type="submission" date="2002-03" db="EMBL/GenBank/DDBJ databases">
        <title>Full-length cDNA from Arabidopsis thaliana.</title>
        <authorList>
            <person name="Brover V.V."/>
            <person name="Troukhan M.E."/>
            <person name="Alexandrov N.A."/>
            <person name="Lu Y.-P."/>
            <person name="Flavell R.B."/>
            <person name="Feldmann K.A."/>
        </authorList>
    </citation>
    <scope>NUCLEOTIDE SEQUENCE [LARGE SCALE MRNA]</scope>
</reference>
<reference key="7">
    <citation type="journal article" date="2005" name="Plant Physiol.">
        <title>Circadian control of messenger RNA stability. Association with a sequence-specific messenger RNA decay pathway.</title>
        <authorList>
            <person name="Lidder P."/>
            <person name="Gutierrez R.A."/>
            <person name="Salome P.A."/>
            <person name="McClung C.R."/>
            <person name="Green P.J."/>
        </authorList>
    </citation>
    <scope>INDUCTION</scope>
    <source>
        <strain>cv. Columbia</strain>
    </source>
</reference>
<reference key="8">
    <citation type="journal article" date="2006" name="Plant Cell">
        <title>Rapid transcriptome changes induced by cytosolic Ca2+ transients reveal ABRE-related sequences as Ca2+-responsive cis elements in Arabidopsis.</title>
        <authorList>
            <person name="Kaplan B."/>
            <person name="Davydov O."/>
            <person name="Knight H."/>
            <person name="Galon Y."/>
            <person name="Knight M.R."/>
            <person name="Fluhr R."/>
            <person name="Fromm H."/>
        </authorList>
    </citation>
    <scope>REPRESSION BY TFP AND W7</scope>
    <source>
        <strain>cv. Wassilewskija</strain>
    </source>
</reference>
<reference key="9">
    <citation type="journal article" date="2016" name="Plant Cell">
        <title>LIGHT-INDUCED RICE1 regulates light-dependent attachment of LEAF-TYPE FERREDOXIN-NADP+ OXIDOREDUCTASE to the thylakoid membrane in rice and Arabidopsis.</title>
        <authorList>
            <person name="Yang C."/>
            <person name="Hu H."/>
            <person name="Ren H."/>
            <person name="Kong Y."/>
            <person name="Lin H."/>
            <person name="Guo J."/>
            <person name="Wang L."/>
            <person name="He Y."/>
            <person name="Ding X."/>
            <person name="Grabsztunowicz M."/>
            <person name="Mulo P."/>
            <person name="Chen T."/>
            <person name="Liu Y."/>
            <person name="Wu Z."/>
            <person name="Wu Y."/>
            <person name="Mao C."/>
            <person name="Wu P."/>
            <person name="Mo X."/>
        </authorList>
    </citation>
    <scope>FUNCTION</scope>
    <scope>DISRUPTION PHENOTYPE</scope>
    <scope>INTERACTION WITH LFNR1 AND LFNR2</scope>
    <scope>REPRESSION BY LIGHT</scope>
    <scope>DISULFIDE BOND</scope>
    <source>
        <strain>cv. Columbia</strain>
    </source>
</reference>
<dbReference type="EMBL" id="X97829">
    <property type="protein sequence ID" value="CAA66408.1"/>
    <property type="molecule type" value="mRNA"/>
</dbReference>
<dbReference type="EMBL" id="X98130">
    <property type="protein sequence ID" value="CAA66824.1"/>
    <property type="molecule type" value="Genomic_DNA"/>
</dbReference>
<dbReference type="EMBL" id="AB026648">
    <property type="protein sequence ID" value="BAB01737.1"/>
    <property type="molecule type" value="Genomic_DNA"/>
</dbReference>
<dbReference type="EMBL" id="CP002686">
    <property type="protein sequence ID" value="AEE77206.1"/>
    <property type="molecule type" value="Genomic_DNA"/>
</dbReference>
<dbReference type="EMBL" id="AF375445">
    <property type="protein sequence ID" value="AAK53029.1"/>
    <property type="molecule type" value="mRNA"/>
</dbReference>
<dbReference type="EMBL" id="AF410315">
    <property type="protein sequence ID" value="AAK95301.1"/>
    <property type="molecule type" value="mRNA"/>
</dbReference>
<dbReference type="EMBL" id="AF424610">
    <property type="protein sequence ID" value="AAL11604.1"/>
    <property type="molecule type" value="mRNA"/>
</dbReference>
<dbReference type="EMBL" id="AY060542">
    <property type="protein sequence ID" value="AAL31173.1"/>
    <property type="molecule type" value="mRNA"/>
</dbReference>
<dbReference type="EMBL" id="AK318707">
    <property type="protein sequence ID" value="BAH56822.1"/>
    <property type="molecule type" value="mRNA"/>
</dbReference>
<dbReference type="EMBL" id="AY088085">
    <property type="protein sequence ID" value="AAM65631.1"/>
    <property type="molecule type" value="mRNA"/>
</dbReference>
<dbReference type="RefSeq" id="NP_189308.1">
    <molecule id="Q96500-1"/>
    <property type="nucleotide sequence ID" value="NM_113585.4"/>
</dbReference>
<dbReference type="FunCoup" id="Q96500">
    <property type="interactions" value="665"/>
</dbReference>
<dbReference type="STRING" id="3702.Q96500"/>
<dbReference type="iPTMnet" id="Q96500"/>
<dbReference type="PaxDb" id="3702-AT3G26740.1"/>
<dbReference type="ProteomicsDB" id="238384">
    <molecule id="Q96500-1"/>
</dbReference>
<dbReference type="EnsemblPlants" id="AT3G26740.1">
    <molecule id="Q96500-1"/>
    <property type="protein sequence ID" value="AT3G26740.1"/>
    <property type="gene ID" value="AT3G26740"/>
</dbReference>
<dbReference type="GeneID" id="822286"/>
<dbReference type="Gramene" id="AT3G26740.1">
    <molecule id="Q96500-1"/>
    <property type="protein sequence ID" value="AT3G26740.1"/>
    <property type="gene ID" value="AT3G26740"/>
</dbReference>
<dbReference type="KEGG" id="ath:AT3G26740"/>
<dbReference type="Araport" id="AT3G26740"/>
<dbReference type="TAIR" id="AT3G26740">
    <property type="gene designation" value="CCL"/>
</dbReference>
<dbReference type="eggNOG" id="ENOG502S43X">
    <property type="taxonomic scope" value="Eukaryota"/>
</dbReference>
<dbReference type="HOGENOM" id="CLU_154099_0_0_1"/>
<dbReference type="InParanoid" id="Q96500"/>
<dbReference type="OMA" id="EFCERPY"/>
<dbReference type="OrthoDB" id="2011897at2759"/>
<dbReference type="PhylomeDB" id="Q96500"/>
<dbReference type="PRO" id="PR:Q96500"/>
<dbReference type="Proteomes" id="UP000006548">
    <property type="component" value="Chromosome 3"/>
</dbReference>
<dbReference type="ExpressionAtlas" id="Q96500">
    <property type="expression patterns" value="baseline and differential"/>
</dbReference>
<dbReference type="GO" id="GO:0009507">
    <property type="term" value="C:chloroplast"/>
    <property type="evidence" value="ECO:0007005"/>
    <property type="project" value="TAIR"/>
</dbReference>
<dbReference type="GO" id="GO:0009941">
    <property type="term" value="C:chloroplast envelope"/>
    <property type="evidence" value="ECO:0007669"/>
    <property type="project" value="UniProtKB-SubCell"/>
</dbReference>
<dbReference type="GO" id="GO:0009570">
    <property type="term" value="C:chloroplast stroma"/>
    <property type="evidence" value="ECO:0007669"/>
    <property type="project" value="UniProtKB-SubCell"/>
</dbReference>
<dbReference type="GO" id="GO:0098807">
    <property type="term" value="C:chloroplast thylakoid membrane protein complex"/>
    <property type="evidence" value="ECO:0000315"/>
    <property type="project" value="UniProtKB"/>
</dbReference>
<dbReference type="GO" id="GO:0005829">
    <property type="term" value="C:cytosol"/>
    <property type="evidence" value="ECO:0007005"/>
    <property type="project" value="TAIR"/>
</dbReference>
<dbReference type="GO" id="GO:0007623">
    <property type="term" value="P:circadian rhythm"/>
    <property type="evidence" value="ECO:0000270"/>
    <property type="project" value="UniProtKB"/>
</dbReference>
<dbReference type="InterPro" id="IPR009856">
    <property type="entry name" value="Lir1"/>
</dbReference>
<dbReference type="PANTHER" id="PTHR36762">
    <property type="entry name" value="LIGHT-REGULATED PROTEIN 1, CHLOROPLASTIC"/>
    <property type="match status" value="1"/>
</dbReference>
<dbReference type="PANTHER" id="PTHR36762:SF2">
    <property type="entry name" value="LIGHT-REGULATED PROTEIN 1, CHLOROPLASTIC"/>
    <property type="match status" value="1"/>
</dbReference>
<dbReference type="Pfam" id="PF07207">
    <property type="entry name" value="Lir1"/>
    <property type="match status" value="1"/>
</dbReference>
<gene>
    <name evidence="8" type="primary">LIR1</name>
    <name evidence="6" type="synonym">CCL</name>
    <name evidence="7" type="synonym">LRP</name>
    <name evidence="9" type="ordered locus">At3g26740</name>
    <name evidence="10" type="ORF">MLJ15.13</name>
</gene>
<proteinExistence type="evidence at protein level"/>
<protein>
    <recommendedName>
        <fullName evidence="8">Light-regulated protein 1, chloroplastic</fullName>
    </recommendedName>
    <alternativeName>
        <fullName evidence="6">Protein CCR-LIKE, chloroplastic</fullName>
    </alternativeName>
</protein>
<accession>Q96500</accession>
<accession>C0Z293</accession>
<feature type="transit peptide" description="Chloroplast" evidence="1">
    <location>
        <begin position="1"/>
        <end position="41"/>
    </location>
</feature>
<feature type="chain" id="PRO_0000442377" description="Light-regulated protein 1, chloroplastic">
    <location>
        <begin position="42"/>
        <end position="141"/>
    </location>
</feature>
<feature type="repeat" description="1">
    <location>
        <begin position="67"/>
        <end position="81"/>
    </location>
</feature>
<feature type="repeat" description="2">
    <location>
        <begin position="118"/>
        <end position="132"/>
    </location>
</feature>
<feature type="region of interest" description="Disordered" evidence="2">
    <location>
        <begin position="35"/>
        <end position="58"/>
    </location>
</feature>
<feature type="region of interest" description="2 X 15 AA approximate repeats">
    <location>
        <begin position="58"/>
        <end position="132"/>
    </location>
</feature>
<feature type="compositionally biased region" description="Low complexity" evidence="2">
    <location>
        <begin position="35"/>
        <end position="51"/>
    </location>
</feature>
<feature type="splice variant" id="VSP_059232" description="In isoform 2.">
    <location>
        <begin position="67"/>
        <end position="141"/>
    </location>
</feature>
<evidence type="ECO:0000255" key="1"/>
<evidence type="ECO:0000256" key="2">
    <source>
        <dbReference type="SAM" id="MobiDB-lite"/>
    </source>
</evidence>
<evidence type="ECO:0000269" key="3">
    <source>
    </source>
</evidence>
<evidence type="ECO:0000269" key="4">
    <source>
    </source>
</evidence>
<evidence type="ECO:0000269" key="5">
    <source>
    </source>
</evidence>
<evidence type="ECO:0000303" key="6">
    <source>
    </source>
</evidence>
<evidence type="ECO:0000303" key="7">
    <source>
    </source>
</evidence>
<evidence type="ECO:0000303" key="8">
    <source>
    </source>
</evidence>
<evidence type="ECO:0000312" key="9">
    <source>
        <dbReference type="Araport" id="AT3G26740"/>
    </source>
</evidence>
<evidence type="ECO:0000312" key="10">
    <source>
        <dbReference type="EMBL" id="BAB01737.1"/>
    </source>
</evidence>
<name>LIRP1_ARATH</name>
<keyword id="KW-0025">Alternative splicing</keyword>
<keyword id="KW-0150">Chloroplast</keyword>
<keyword id="KW-1015">Disulfide bond</keyword>
<keyword id="KW-0472">Membrane</keyword>
<keyword id="KW-0934">Plastid</keyword>
<keyword id="KW-1185">Reference proteome</keyword>
<keyword id="KW-0677">Repeat</keyword>
<keyword id="KW-0793">Thylakoid</keyword>
<keyword id="KW-0809">Transit peptide</keyword>
<organism>
    <name type="scientific">Arabidopsis thaliana</name>
    <name type="common">Mouse-ear cress</name>
    <dbReference type="NCBI Taxonomy" id="3702"/>
    <lineage>
        <taxon>Eukaryota</taxon>
        <taxon>Viridiplantae</taxon>
        <taxon>Streptophyta</taxon>
        <taxon>Embryophyta</taxon>
        <taxon>Tracheophyta</taxon>
        <taxon>Spermatophyta</taxon>
        <taxon>Magnoliopsida</taxon>
        <taxon>eudicotyledons</taxon>
        <taxon>Gunneridae</taxon>
        <taxon>Pentapetalae</taxon>
        <taxon>rosids</taxon>
        <taxon>malvids</taxon>
        <taxon>Brassicales</taxon>
        <taxon>Brassicaceae</taxon>
        <taxon>Camelineae</taxon>
        <taxon>Arabidopsis</taxon>
    </lineage>
</organism>